<comment type="subcellular location">
    <subcellularLocation>
        <location evidence="1">Secreted</location>
    </subcellularLocation>
    <subcellularLocation>
        <location evidence="1">Cell surface</location>
    </subcellularLocation>
    <subcellularLocation>
        <location evidence="1">Fimbrium</location>
    </subcellularLocation>
</comment>
<comment type="induction">
    <text evidence="3">Expressed under standard laboratory conditions at 35 degrees Celsius.</text>
</comment>
<comment type="domain">
    <text evidence="2">Contains an amino terminal motif QXSXEXXXL, which is part of a class III signal sequence.</text>
</comment>
<comment type="PTM">
    <text evidence="5">The N-terminus is probably cleaved by the prepilin peptidase EppA, which recognizes the class III signal sequence.</text>
</comment>
<comment type="disruption phenotype">
    <text evidence="3">Disruption of the gene does not change the piliation compared with the parent cells.</text>
</comment>
<gene>
    <name evidence="6" type="ordered locus">MMP0600</name>
</gene>
<protein>
    <recommendedName>
        <fullName evidence="4">Probable minor pilin MMP0600</fullName>
    </recommendedName>
</protein>
<reference key="1">
    <citation type="journal article" date="2004" name="J. Bacteriol.">
        <title>Complete genome sequence of the genetically tractable hydrogenotrophic methanogen Methanococcus maripaludis.</title>
        <authorList>
            <person name="Hendrickson E.L."/>
            <person name="Kaul R."/>
            <person name="Zhou Y."/>
            <person name="Bovee D."/>
            <person name="Chapman P."/>
            <person name="Chung J."/>
            <person name="Conway de Macario E."/>
            <person name="Dodsworth J.A."/>
            <person name="Gillett W."/>
            <person name="Graham D.E."/>
            <person name="Hackett M."/>
            <person name="Haydock A.K."/>
            <person name="Kang A."/>
            <person name="Land M.L."/>
            <person name="Levy R."/>
            <person name="Lie T.J."/>
            <person name="Major T.A."/>
            <person name="Moore B.C."/>
            <person name="Porat I."/>
            <person name="Palmeiri A."/>
            <person name="Rouse G."/>
            <person name="Saenphimmachak C."/>
            <person name="Soell D."/>
            <person name="Van Dien S."/>
            <person name="Wang T."/>
            <person name="Whitman W.B."/>
            <person name="Xia Q."/>
            <person name="Zhang Y."/>
            <person name="Larimer F.W."/>
            <person name="Olson M.V."/>
            <person name="Leigh J.A."/>
        </authorList>
    </citation>
    <scope>NUCLEOTIDE SEQUENCE [LARGE SCALE GENOMIC DNA]</scope>
    <source>
        <strain>DSM 14266 / JCM 13030 / NBRC 101832 / S2 / LL</strain>
    </source>
</reference>
<reference key="2">
    <citation type="journal article" date="2013" name="PLoS ONE">
        <title>Identification of an additional minor pilin essential for piliation in the archaeon Methanococcus maripaludis.</title>
        <authorList>
            <person name="Nair D.B."/>
            <person name="Chung D.K."/>
            <person name="Schneider J."/>
            <person name="Uchida K."/>
            <person name="Aizawa S."/>
            <person name="Jarrell K.F."/>
        </authorList>
    </citation>
    <scope>EXPRESSION</scope>
    <scope>DISRUPTION PHENOTYPE</scope>
    <source>
        <strain>DSM 14266 / JCM 13030 / NBRC 101832 / S2 / LL</strain>
    </source>
</reference>
<proteinExistence type="evidence at transcript level"/>
<accession>Q6LZM4</accession>
<evidence type="ECO:0000250" key="1">
    <source>
        <dbReference type="UniProtKB" id="Q6LWM4"/>
    </source>
</evidence>
<evidence type="ECO:0000250" key="2">
    <source>
        <dbReference type="UniProtKB" id="Q6M0N7"/>
    </source>
</evidence>
<evidence type="ECO:0000269" key="3">
    <source>
    </source>
</evidence>
<evidence type="ECO:0000305" key="4"/>
<evidence type="ECO:0000305" key="5">
    <source>
    </source>
</evidence>
<evidence type="ECO:0000312" key="6">
    <source>
        <dbReference type="EMBL" id="CAF30156.1"/>
    </source>
</evidence>
<sequence length="227" mass="25327">MAKFSKGQISIELILLMTAVLLAGILVSVNMTRFTFEGDILSDVREDAFQVFEISTDTPIIVYSLNFSNVKISPSTNLYNAWLQINDTGNDTYLWYYSDGTFKGLANTSDPDESITEENLVLLPHEGYASDIIFRSNVPTAMSWDSYEIDFNDIKKFEIIANDVENNPISYSLTHGDSPETSNQAYLNIKANEVTIIVTKANDKVFEVIANTTSGTIELLPYTETSP</sequence>
<dbReference type="EMBL" id="BX950229">
    <property type="protein sequence ID" value="CAF30156.1"/>
    <property type="molecule type" value="Genomic_DNA"/>
</dbReference>
<dbReference type="RefSeq" id="WP_011170544.1">
    <property type="nucleotide sequence ID" value="NC_005791.1"/>
</dbReference>
<dbReference type="STRING" id="267377.MMP0600"/>
<dbReference type="EnsemblBacteria" id="CAF30156">
    <property type="protein sequence ID" value="CAF30156"/>
    <property type="gene ID" value="MMP0600"/>
</dbReference>
<dbReference type="GeneID" id="2762491"/>
<dbReference type="KEGG" id="mmp:MMP0600"/>
<dbReference type="PATRIC" id="fig|267377.15.peg.614"/>
<dbReference type="eggNOG" id="arCOG06626">
    <property type="taxonomic scope" value="Archaea"/>
</dbReference>
<dbReference type="HOGENOM" id="CLU_1232782_0_0_2"/>
<dbReference type="OrthoDB" id="60487at2157"/>
<dbReference type="Proteomes" id="UP000000590">
    <property type="component" value="Chromosome"/>
</dbReference>
<dbReference type="GO" id="GO:0009986">
    <property type="term" value="C:cell surface"/>
    <property type="evidence" value="ECO:0007669"/>
    <property type="project" value="UniProtKB-SubCell"/>
</dbReference>
<dbReference type="GO" id="GO:0005576">
    <property type="term" value="C:extracellular region"/>
    <property type="evidence" value="ECO:0007669"/>
    <property type="project" value="UniProtKB-SubCell"/>
</dbReference>
<dbReference type="GO" id="GO:0016020">
    <property type="term" value="C:membrane"/>
    <property type="evidence" value="ECO:0007669"/>
    <property type="project" value="UniProtKB-KW"/>
</dbReference>
<dbReference type="InterPro" id="IPR007166">
    <property type="entry name" value="Class3_signal_pept_motif"/>
</dbReference>
<dbReference type="Pfam" id="PF04021">
    <property type="entry name" value="Class_IIIsignal"/>
    <property type="match status" value="1"/>
</dbReference>
<organism>
    <name type="scientific">Methanococcus maripaludis (strain DSM 14266 / JCM 13030 / NBRC 101832 / S2 / LL)</name>
    <dbReference type="NCBI Taxonomy" id="267377"/>
    <lineage>
        <taxon>Archaea</taxon>
        <taxon>Methanobacteriati</taxon>
        <taxon>Methanobacteriota</taxon>
        <taxon>Methanomada group</taxon>
        <taxon>Methanococci</taxon>
        <taxon>Methanococcales</taxon>
        <taxon>Methanococcaceae</taxon>
        <taxon>Methanococcus</taxon>
    </lineage>
</organism>
<keyword id="KW-0281">Fimbrium</keyword>
<keyword id="KW-1185">Reference proteome</keyword>
<keyword id="KW-0964">Secreted</keyword>
<name>Y600_METMP</name>
<feature type="propeptide" id="PRO_0000462052" evidence="5">
    <location>
        <begin position="1"/>
        <end position="7"/>
    </location>
</feature>
<feature type="chain" id="PRO_0000462053" description="Probable minor pilin MMP0600">
    <location>
        <begin position="8"/>
        <end position="227"/>
    </location>
</feature>
<feature type="short sequence motif" description="QXSXEXXXL" evidence="4">
    <location>
        <begin position="8"/>
        <end position="16"/>
    </location>
</feature>